<sequence length="485" mass="52513">MMVMNPLTATFLAALIGTAASASCGSSGIPFRFEVLPSGQPVLGCGSPTCFGAENGGRDLRHDSSFMAGADGDDGFFRDGDLARVRVRDPDAPAQMANCPREFSSSSCSNPMTWVGGFKASDNGDLSLQCCHYEGLRFAQEVGRPVVHPGEVYSGGEVLRDGRQTGFDAISNVRKITSGDGTVAYEVTVTRMNCLPNPGEESNEVSFDIQRDIGRILDKVGETAASGVQTNHIEADQRLSPSTDVQSDSYVSPTEADPQEPVEQFVQVGEQVVPVTSAGYYYPVASGVPACFTGNSKVMTPAGEKSMADLSVGDMVMTYEYGKMTYTRVASWLHRLPDTKAAFIKLTTEQGAIIDMTPQHFIYKANCVTEEMELVYAEDMTIGDCLMVKENEKLVMTTISEKSTFYETGVYAPMTETGDLIVDDVYASCHNVVKANTLSHTFLNFATSVQQKMRSVLGSLEETGHLPATSEFFLNIIDVLLPHKY</sequence>
<proteinExistence type="evidence at transcript level"/>
<feature type="signal peptide" evidence="3">
    <location>
        <begin position="1"/>
        <end position="21"/>
    </location>
</feature>
<feature type="chain" id="PRO_0000013259" description="Warthog protein 1">
    <location>
        <begin position="22"/>
        <end position="485"/>
    </location>
</feature>
<feature type="chain" id="PRO_0000013260" description="Warthog protein 1 N-product" evidence="1">
    <location>
        <begin position="22"/>
        <end position="290"/>
    </location>
</feature>
<feature type="chain" id="PRO_0000013261" description="Warthog protein 1 C-product" evidence="1">
    <location>
        <begin position="291"/>
        <end position="485"/>
    </location>
</feature>
<feature type="region of interest" description="Disordered" evidence="4">
    <location>
        <begin position="236"/>
        <end position="258"/>
    </location>
</feature>
<feature type="compositionally biased region" description="Polar residues" evidence="4">
    <location>
        <begin position="239"/>
        <end position="252"/>
    </location>
</feature>
<feature type="site" description="Cleavage; by autolysis" evidence="1">
    <location>
        <begin position="290"/>
        <end position="291"/>
    </location>
</feature>
<feature type="site" description="Involved in auto-cleavage" evidence="1">
    <location>
        <position position="357"/>
    </location>
</feature>
<feature type="site" description="Essential for auto-cleavage" evidence="1">
    <location>
        <position position="360"/>
    </location>
</feature>
<protein>
    <recommendedName>
        <fullName>Warthog protein 1</fullName>
    </recommendedName>
    <component>
        <recommendedName>
            <fullName>Warthog protein 1 N-product</fullName>
        </recommendedName>
    </component>
    <component>
        <recommendedName>
            <fullName>Warthog protein 1 C-product</fullName>
        </recommendedName>
    </component>
</protein>
<keyword id="KW-0068">Autocatalytic cleavage</keyword>
<keyword id="KW-1003">Cell membrane</keyword>
<keyword id="KW-0217">Developmental protein</keyword>
<keyword id="KW-0378">Hydrolase</keyword>
<keyword id="KW-0472">Membrane</keyword>
<keyword id="KW-0645">Protease</keyword>
<keyword id="KW-1185">Reference proteome</keyword>
<keyword id="KW-0964">Secreted</keyword>
<keyword id="KW-0732">Signal</keyword>
<comment type="function">
    <text evidence="2">Intercellular signal essential for a variety of patterning events during development.</text>
</comment>
<comment type="subcellular location">
    <molecule>Warthog protein 1</molecule>
    <subcellularLocation>
        <location evidence="1">Secreted</location>
    </subcellularLocation>
    <subcellularLocation>
        <location evidence="1">Cell surface</location>
    </subcellularLocation>
    <text evidence="1">Also secreted in either cleaved or uncleaved form to mediate signaling to other cells.</text>
</comment>
<comment type="subcellular location">
    <molecule>Warthog protein 1 N-product</molecule>
    <subcellularLocation>
        <location evidence="1">Cell membrane</location>
        <topology evidence="1">Peripheral membrane protein</topology>
        <orientation evidence="1">Extracellular side</orientation>
    </subcellularLocation>
</comment>
<comment type="subcellular location">
    <molecule>Warthog protein 1 C-product</molecule>
    <subcellularLocation>
        <location evidence="1">Secreted</location>
        <location evidence="1">Extracellular space</location>
    </subcellularLocation>
    <text evidence="1">Also secreted in either cleaved or uncleaved form to mediate signaling to other cells.</text>
</comment>
<comment type="PTM">
    <text evidence="5">The C-terminal domain displays an autoproteolysis activity.</text>
</comment>
<comment type="similarity">
    <text evidence="6">Belongs to the hedgehog family.</text>
</comment>
<comment type="sequence caution" evidence="6">
    <conflict type="erroneous initiation">
        <sequence resource="EMBL-CDS" id="CCD65942"/>
    </conflict>
    <text>Truncated N-terminus.</text>
</comment>
<accession>Q94128</accession>
<dbReference type="EMBL" id="U61235">
    <property type="protein sequence ID" value="AAB17540.1"/>
    <property type="molecule type" value="mRNA"/>
</dbReference>
<dbReference type="EMBL" id="FO080700">
    <property type="protein sequence ID" value="CCD65942.1"/>
    <property type="status" value="ALT_INIT"/>
    <property type="molecule type" value="Genomic_DNA"/>
</dbReference>
<dbReference type="PIR" id="T34504">
    <property type="entry name" value="T34504"/>
</dbReference>
<dbReference type="RefSeq" id="NP_495579.3">
    <property type="nucleotide sequence ID" value="NM_063178.6"/>
</dbReference>
<dbReference type="SMR" id="Q94128"/>
<dbReference type="FunCoup" id="Q94128">
    <property type="interactions" value="377"/>
</dbReference>
<dbReference type="STRING" id="6239.ZK1290.12.1"/>
<dbReference type="MEROPS" id="C46.006"/>
<dbReference type="PaxDb" id="6239-ZK1290.12"/>
<dbReference type="PeptideAtlas" id="Q94128"/>
<dbReference type="EnsemblMetazoa" id="ZK1290.12.1">
    <property type="protein sequence ID" value="ZK1290.12.1"/>
    <property type="gene ID" value="WBGene00006947"/>
</dbReference>
<dbReference type="GeneID" id="174223"/>
<dbReference type="KEGG" id="cel:CELE_ZK1290.12"/>
<dbReference type="UCSC" id="ZK1290.12">
    <property type="organism name" value="c. elegans"/>
</dbReference>
<dbReference type="AGR" id="WB:WBGene00006947"/>
<dbReference type="CTD" id="174223"/>
<dbReference type="WormBase" id="ZK1290.12">
    <property type="protein sequence ID" value="CE15545"/>
    <property type="gene ID" value="WBGene00006947"/>
    <property type="gene designation" value="wrt-1"/>
</dbReference>
<dbReference type="eggNOG" id="KOG3638">
    <property type="taxonomic scope" value="Eukaryota"/>
</dbReference>
<dbReference type="HOGENOM" id="CLU_034413_0_0_1"/>
<dbReference type="InParanoid" id="Q94128"/>
<dbReference type="OrthoDB" id="5212at2759"/>
<dbReference type="PhylomeDB" id="Q94128"/>
<dbReference type="PRO" id="PR:Q94128"/>
<dbReference type="Proteomes" id="UP000001940">
    <property type="component" value="Chromosome II"/>
</dbReference>
<dbReference type="Bgee" id="WBGene00006947">
    <property type="expression patterns" value="Expressed in pharyngeal muscle cell (C elegans) and 3 other cell types or tissues"/>
</dbReference>
<dbReference type="GO" id="GO:0009986">
    <property type="term" value="C:cell surface"/>
    <property type="evidence" value="ECO:0007669"/>
    <property type="project" value="UniProtKB-SubCell"/>
</dbReference>
<dbReference type="GO" id="GO:0031012">
    <property type="term" value="C:extracellular matrix"/>
    <property type="evidence" value="ECO:0000318"/>
    <property type="project" value="GO_Central"/>
</dbReference>
<dbReference type="GO" id="GO:0005576">
    <property type="term" value="C:extracellular region"/>
    <property type="evidence" value="ECO:0000303"/>
    <property type="project" value="UniProtKB"/>
</dbReference>
<dbReference type="GO" id="GO:0005886">
    <property type="term" value="C:plasma membrane"/>
    <property type="evidence" value="ECO:0000303"/>
    <property type="project" value="UniProtKB"/>
</dbReference>
<dbReference type="GO" id="GO:0008233">
    <property type="term" value="F:peptidase activity"/>
    <property type="evidence" value="ECO:0007669"/>
    <property type="project" value="UniProtKB-KW"/>
</dbReference>
<dbReference type="GO" id="GO:0007267">
    <property type="term" value="P:cell-cell signaling"/>
    <property type="evidence" value="ECO:0000303"/>
    <property type="project" value="UniProtKB"/>
</dbReference>
<dbReference type="GO" id="GO:0016539">
    <property type="term" value="P:intein-mediated protein splicing"/>
    <property type="evidence" value="ECO:0007669"/>
    <property type="project" value="InterPro"/>
</dbReference>
<dbReference type="GO" id="GO:0090597">
    <property type="term" value="P:nematode male tail mating organ morphogenesis"/>
    <property type="evidence" value="ECO:0000315"/>
    <property type="project" value="WormBase"/>
</dbReference>
<dbReference type="GO" id="GO:0016540">
    <property type="term" value="P:protein autoprocessing"/>
    <property type="evidence" value="ECO:0000303"/>
    <property type="project" value="UniProtKB"/>
</dbReference>
<dbReference type="GO" id="GO:0007367">
    <property type="term" value="P:segment polarity determination"/>
    <property type="evidence" value="ECO:0000303"/>
    <property type="project" value="UniProtKB"/>
</dbReference>
<dbReference type="CDD" id="cd00081">
    <property type="entry name" value="Hint"/>
    <property type="match status" value="1"/>
</dbReference>
<dbReference type="Gene3D" id="2.170.16.10">
    <property type="entry name" value="Hedgehog/Intein (Hint) domain"/>
    <property type="match status" value="1"/>
</dbReference>
<dbReference type="InterPro" id="IPR052140">
    <property type="entry name" value="Dev_Signal_Hedgehog-like"/>
</dbReference>
<dbReference type="InterPro" id="IPR001657">
    <property type="entry name" value="Hedgehog"/>
</dbReference>
<dbReference type="InterPro" id="IPR001767">
    <property type="entry name" value="Hedgehog_Hint"/>
</dbReference>
<dbReference type="InterPro" id="IPR003586">
    <property type="entry name" value="Hint_dom_C"/>
</dbReference>
<dbReference type="InterPro" id="IPR003587">
    <property type="entry name" value="Hint_dom_N"/>
</dbReference>
<dbReference type="InterPro" id="IPR036844">
    <property type="entry name" value="Hint_dom_sf"/>
</dbReference>
<dbReference type="InterPro" id="IPR006141">
    <property type="entry name" value="Intein_N"/>
</dbReference>
<dbReference type="PANTHER" id="PTHR46706">
    <property type="entry name" value="PROTEIN QUA-1-RELATED"/>
    <property type="match status" value="1"/>
</dbReference>
<dbReference type="PANTHER" id="PTHR46706:SF12">
    <property type="entry name" value="PROTEIN QUA-1-RELATED"/>
    <property type="match status" value="1"/>
</dbReference>
<dbReference type="Pfam" id="PF01079">
    <property type="entry name" value="Hint"/>
    <property type="match status" value="1"/>
</dbReference>
<dbReference type="PRINTS" id="PR00632">
    <property type="entry name" value="SONICHHOG"/>
</dbReference>
<dbReference type="SMART" id="SM00305">
    <property type="entry name" value="HintC"/>
    <property type="match status" value="1"/>
</dbReference>
<dbReference type="SMART" id="SM00306">
    <property type="entry name" value="HintN"/>
    <property type="match status" value="1"/>
</dbReference>
<dbReference type="SUPFAM" id="SSF51294">
    <property type="entry name" value="Hedgehog/intein (Hint) domain"/>
    <property type="match status" value="1"/>
</dbReference>
<dbReference type="PROSITE" id="PS50817">
    <property type="entry name" value="INTEIN_N_TER"/>
    <property type="match status" value="1"/>
</dbReference>
<gene>
    <name type="primary">wrt-1</name>
    <name type="ORF">ZK1290.12</name>
</gene>
<organism>
    <name type="scientific">Caenorhabditis elegans</name>
    <dbReference type="NCBI Taxonomy" id="6239"/>
    <lineage>
        <taxon>Eukaryota</taxon>
        <taxon>Metazoa</taxon>
        <taxon>Ecdysozoa</taxon>
        <taxon>Nematoda</taxon>
        <taxon>Chromadorea</taxon>
        <taxon>Rhabditida</taxon>
        <taxon>Rhabditina</taxon>
        <taxon>Rhabditomorpha</taxon>
        <taxon>Rhabditoidea</taxon>
        <taxon>Rhabditidae</taxon>
        <taxon>Peloderinae</taxon>
        <taxon>Caenorhabditis</taxon>
    </lineage>
</organism>
<reference evidence="6" key="1">
    <citation type="journal article" date="1996" name="Cell">
        <title>Hedgehog patterning activity: role of a lipophilic modification mediated by the carboxy-terminal autoprocessing domain.</title>
        <authorList>
            <person name="Porter J.A."/>
            <person name="Ekker S.C."/>
            <person name="Park W.-J."/>
            <person name="von Kessler D.P."/>
            <person name="Young K.E."/>
            <person name="Chen C.-H."/>
            <person name="Ma Y."/>
            <person name="Woods A.S."/>
            <person name="Cotter R.J."/>
            <person name="Koonin E.V."/>
            <person name="Beachy P.A."/>
        </authorList>
    </citation>
    <scope>NUCLEOTIDE SEQUENCE [MRNA]</scope>
    <source>
        <strain>Bristol N2</strain>
    </source>
</reference>
<reference key="2">
    <citation type="journal article" date="1998" name="Science">
        <title>Genome sequence of the nematode C. elegans: a platform for investigating biology.</title>
        <authorList>
            <consortium name="The C. elegans sequencing consortium"/>
        </authorList>
    </citation>
    <scope>NUCLEOTIDE SEQUENCE [LARGE SCALE GENOMIC DNA]</scope>
    <source>
        <strain>Bristol N2</strain>
    </source>
</reference>
<evidence type="ECO:0000250" key="1"/>
<evidence type="ECO:0000250" key="2">
    <source>
        <dbReference type="UniProtKB" id="Q02936"/>
    </source>
</evidence>
<evidence type="ECO:0000255" key="3"/>
<evidence type="ECO:0000256" key="4">
    <source>
        <dbReference type="SAM" id="MobiDB-lite"/>
    </source>
</evidence>
<evidence type="ECO:0000269" key="5">
    <source>
    </source>
</evidence>
<evidence type="ECO:0000305" key="6"/>
<name>WRT1_CAEEL</name>